<proteinExistence type="inferred from homology"/>
<protein>
    <recommendedName>
        <fullName evidence="2">Redox-sensing transcriptional repressor Rex</fullName>
    </recommendedName>
</protein>
<organism>
    <name type="scientific">Streptococcus pneumoniae (strain ATCC 700669 / Spain 23F-1)</name>
    <dbReference type="NCBI Taxonomy" id="561276"/>
    <lineage>
        <taxon>Bacteria</taxon>
        <taxon>Bacillati</taxon>
        <taxon>Bacillota</taxon>
        <taxon>Bacilli</taxon>
        <taxon>Lactobacillales</taxon>
        <taxon>Streptococcaceae</taxon>
        <taxon>Streptococcus</taxon>
    </lineage>
</organism>
<name>REX_STRPJ</name>
<evidence type="ECO:0000250" key="1">
    <source>
        <dbReference type="UniProtKB" id="Q04KJ6"/>
    </source>
</evidence>
<evidence type="ECO:0000255" key="2">
    <source>
        <dbReference type="HAMAP-Rule" id="MF_01131"/>
    </source>
</evidence>
<dbReference type="EMBL" id="FM211187">
    <property type="protein sequence ID" value="CAR68834.1"/>
    <property type="molecule type" value="Genomic_DNA"/>
</dbReference>
<dbReference type="RefSeq" id="WP_000653403.1">
    <property type="nucleotide sequence ID" value="NC_011900.1"/>
</dbReference>
<dbReference type="SMR" id="B8ZPT7"/>
<dbReference type="KEGG" id="sne:SPN23F10110"/>
<dbReference type="HOGENOM" id="CLU_061534_1_1_9"/>
<dbReference type="GO" id="GO:0005737">
    <property type="term" value="C:cytoplasm"/>
    <property type="evidence" value="ECO:0007669"/>
    <property type="project" value="UniProtKB-SubCell"/>
</dbReference>
<dbReference type="GO" id="GO:0003677">
    <property type="term" value="F:DNA binding"/>
    <property type="evidence" value="ECO:0007669"/>
    <property type="project" value="UniProtKB-UniRule"/>
</dbReference>
<dbReference type="GO" id="GO:0003700">
    <property type="term" value="F:DNA-binding transcription factor activity"/>
    <property type="evidence" value="ECO:0007669"/>
    <property type="project" value="UniProtKB-UniRule"/>
</dbReference>
<dbReference type="GO" id="GO:0045892">
    <property type="term" value="P:negative regulation of DNA-templated transcription"/>
    <property type="evidence" value="ECO:0007669"/>
    <property type="project" value="InterPro"/>
</dbReference>
<dbReference type="GO" id="GO:0051775">
    <property type="term" value="P:response to redox state"/>
    <property type="evidence" value="ECO:0007669"/>
    <property type="project" value="InterPro"/>
</dbReference>
<dbReference type="Gene3D" id="3.40.50.720">
    <property type="entry name" value="NAD(P)-binding Rossmann-like Domain"/>
    <property type="match status" value="1"/>
</dbReference>
<dbReference type="Gene3D" id="1.10.10.10">
    <property type="entry name" value="Winged helix-like DNA-binding domain superfamily/Winged helix DNA-binding domain"/>
    <property type="match status" value="1"/>
</dbReference>
<dbReference type="HAMAP" id="MF_01131">
    <property type="entry name" value="Rex"/>
    <property type="match status" value="1"/>
</dbReference>
<dbReference type="InterPro" id="IPR003781">
    <property type="entry name" value="CoA-bd"/>
</dbReference>
<dbReference type="InterPro" id="IPR036291">
    <property type="entry name" value="NAD(P)-bd_dom_sf"/>
</dbReference>
<dbReference type="InterPro" id="IPR009718">
    <property type="entry name" value="Rex_DNA-bd_C_dom"/>
</dbReference>
<dbReference type="InterPro" id="IPR022876">
    <property type="entry name" value="Tscrpt_rep_Rex"/>
</dbReference>
<dbReference type="InterPro" id="IPR036388">
    <property type="entry name" value="WH-like_DNA-bd_sf"/>
</dbReference>
<dbReference type="InterPro" id="IPR036390">
    <property type="entry name" value="WH_DNA-bd_sf"/>
</dbReference>
<dbReference type="NCBIfam" id="NF003988">
    <property type="entry name" value="PRK05472.1-1"/>
    <property type="match status" value="1"/>
</dbReference>
<dbReference type="NCBIfam" id="NF003989">
    <property type="entry name" value="PRK05472.1-3"/>
    <property type="match status" value="1"/>
</dbReference>
<dbReference type="NCBIfam" id="NF003991">
    <property type="entry name" value="PRK05472.1-5"/>
    <property type="match status" value="1"/>
</dbReference>
<dbReference type="NCBIfam" id="NF003994">
    <property type="entry name" value="PRK05472.2-3"/>
    <property type="match status" value="1"/>
</dbReference>
<dbReference type="NCBIfam" id="NF003995">
    <property type="entry name" value="PRK05472.2-4"/>
    <property type="match status" value="1"/>
</dbReference>
<dbReference type="NCBIfam" id="NF003996">
    <property type="entry name" value="PRK05472.2-5"/>
    <property type="match status" value="1"/>
</dbReference>
<dbReference type="PANTHER" id="PTHR35786">
    <property type="entry name" value="REDOX-SENSING TRANSCRIPTIONAL REPRESSOR REX"/>
    <property type="match status" value="1"/>
</dbReference>
<dbReference type="PANTHER" id="PTHR35786:SF1">
    <property type="entry name" value="REDOX-SENSING TRANSCRIPTIONAL REPRESSOR REX 1"/>
    <property type="match status" value="1"/>
</dbReference>
<dbReference type="Pfam" id="PF02629">
    <property type="entry name" value="CoA_binding"/>
    <property type="match status" value="1"/>
</dbReference>
<dbReference type="Pfam" id="PF06971">
    <property type="entry name" value="Put_DNA-bind_N"/>
    <property type="match status" value="1"/>
</dbReference>
<dbReference type="SMART" id="SM00881">
    <property type="entry name" value="CoA_binding"/>
    <property type="match status" value="1"/>
</dbReference>
<dbReference type="SUPFAM" id="SSF51735">
    <property type="entry name" value="NAD(P)-binding Rossmann-fold domains"/>
    <property type="match status" value="1"/>
</dbReference>
<dbReference type="SUPFAM" id="SSF46785">
    <property type="entry name" value="Winged helix' DNA-binding domain"/>
    <property type="match status" value="1"/>
</dbReference>
<keyword id="KW-0963">Cytoplasm</keyword>
<keyword id="KW-0238">DNA-binding</keyword>
<keyword id="KW-0520">NAD</keyword>
<keyword id="KW-0678">Repressor</keyword>
<keyword id="KW-0804">Transcription</keyword>
<keyword id="KW-0805">Transcription regulation</keyword>
<gene>
    <name evidence="2" type="primary">rex</name>
    <name type="ordered locus">SPN23F10110</name>
</gene>
<feature type="chain" id="PRO_1000164087" description="Redox-sensing transcriptional repressor Rex">
    <location>
        <begin position="1"/>
        <end position="213"/>
    </location>
</feature>
<feature type="DNA-binding region" description="H-T-H motif" evidence="2">
    <location>
        <begin position="18"/>
        <end position="57"/>
    </location>
</feature>
<feature type="binding site" evidence="2">
    <location>
        <begin position="92"/>
        <end position="97"/>
    </location>
    <ligand>
        <name>NAD(+)</name>
        <dbReference type="ChEBI" id="CHEBI:57540"/>
    </ligand>
</feature>
<accession>B8ZPT7</accession>
<reference key="1">
    <citation type="journal article" date="2009" name="J. Bacteriol.">
        <title>Role of conjugative elements in the evolution of the multidrug-resistant pandemic clone Streptococcus pneumoniae Spain23F ST81.</title>
        <authorList>
            <person name="Croucher N.J."/>
            <person name="Walker D."/>
            <person name="Romero P."/>
            <person name="Lennard N."/>
            <person name="Paterson G.K."/>
            <person name="Bason N.C."/>
            <person name="Mitchell A.M."/>
            <person name="Quail M.A."/>
            <person name="Andrew P.W."/>
            <person name="Parkhill J."/>
            <person name="Bentley S.D."/>
            <person name="Mitchell T.J."/>
        </authorList>
    </citation>
    <scope>NUCLEOTIDE SEQUENCE [LARGE SCALE GENOMIC DNA]</scope>
    <source>
        <strain>ATCC 700669 / Spain 23F-1</strain>
    </source>
</reference>
<sequence length="213" mass="24165">MKDKQFAIPKATAKRLSLYYRIFKRFHAEKIERANSKQIAEAIGIDSATVRRDFSYFGELGRRGFGYDVKKLMTFFADLLNDNSITNVMLVGIGNMGHALLHYRFHERNKMKIIMAFDLDDHPEVGTQTPDGIPIYGISQIKDKIKDADVKTAILTVPSVKSQEVANLLVDAGVKGILSFSPVHLHLPKDVVVQYVDLTSELQTLLYFMRKED</sequence>
<comment type="function">
    <text evidence="1 2">Modulates transcription in response to changes in cellular NADH/NAD(+) redox state (By similarity). Binds to the promoter of the aldehyde-alcohol dehydrogenase adhE gene. Functions as a redox-dependent repressor of adhE expression (By similarity).</text>
</comment>
<comment type="subunit">
    <text evidence="2">Homodimer.</text>
</comment>
<comment type="subcellular location">
    <subcellularLocation>
        <location evidence="2">Cytoplasm</location>
    </subcellularLocation>
</comment>
<comment type="similarity">
    <text evidence="2">Belongs to the transcriptional regulatory Rex family.</text>
</comment>